<keyword id="KW-0489">Methyltransferase</keyword>
<keyword id="KW-0949">S-adenosyl-L-methionine</keyword>
<keyword id="KW-0808">Transferase</keyword>
<keyword id="KW-0831">Ubiquinone biosynthesis</keyword>
<sequence length="237" mass="26559">MSQLNVDLQEIAKFEALAAKWWDQHSEFRPLHQINPLRLNWIDERAGGLAGKKVLDVGCGGGILAESMARRGADVLGIDMGEAPLAVGRLHAQQENVQNIEYRQIPVEELAQEQAGQYDVVTCMEMMEHVPDPASIVKACQTLVKPGGHVFFSTINRNPKSYLFAIIGAEYVLRMLPKGTHDYHKFIRPSEMAHDIRNAGLTLKEMTGLHYNPITKRYWLAPNVDVNYMVHTVKTGA</sequence>
<gene>
    <name evidence="1" type="primary">ubiG</name>
    <name type="ordered locus">ABAYE3834</name>
</gene>
<comment type="function">
    <text evidence="1">O-methyltransferase that catalyzes the 2 O-methylation steps in the ubiquinone biosynthetic pathway.</text>
</comment>
<comment type="catalytic activity">
    <reaction evidence="1">
        <text>a 3-demethylubiquinol + S-adenosyl-L-methionine = a ubiquinol + S-adenosyl-L-homocysteine + H(+)</text>
        <dbReference type="Rhea" id="RHEA:44380"/>
        <dbReference type="Rhea" id="RHEA-COMP:9566"/>
        <dbReference type="Rhea" id="RHEA-COMP:10914"/>
        <dbReference type="ChEBI" id="CHEBI:15378"/>
        <dbReference type="ChEBI" id="CHEBI:17976"/>
        <dbReference type="ChEBI" id="CHEBI:57856"/>
        <dbReference type="ChEBI" id="CHEBI:59789"/>
        <dbReference type="ChEBI" id="CHEBI:84422"/>
        <dbReference type="EC" id="2.1.1.64"/>
    </reaction>
</comment>
<comment type="catalytic activity">
    <reaction evidence="1">
        <text>a 3-(all-trans-polyprenyl)benzene-1,2-diol + S-adenosyl-L-methionine = a 2-methoxy-6-(all-trans-polyprenyl)phenol + S-adenosyl-L-homocysteine + H(+)</text>
        <dbReference type="Rhea" id="RHEA:31411"/>
        <dbReference type="Rhea" id="RHEA-COMP:9550"/>
        <dbReference type="Rhea" id="RHEA-COMP:9551"/>
        <dbReference type="ChEBI" id="CHEBI:15378"/>
        <dbReference type="ChEBI" id="CHEBI:57856"/>
        <dbReference type="ChEBI" id="CHEBI:59789"/>
        <dbReference type="ChEBI" id="CHEBI:62729"/>
        <dbReference type="ChEBI" id="CHEBI:62731"/>
        <dbReference type="EC" id="2.1.1.222"/>
    </reaction>
</comment>
<comment type="pathway">
    <text evidence="1">Cofactor biosynthesis; ubiquinone biosynthesis.</text>
</comment>
<comment type="similarity">
    <text evidence="1">Belongs to the methyltransferase superfamily. UbiG/COQ3 family.</text>
</comment>
<reference key="1">
    <citation type="journal article" date="2008" name="PLoS ONE">
        <title>Comparative analysis of Acinetobacters: three genomes for three lifestyles.</title>
        <authorList>
            <person name="Vallenet D."/>
            <person name="Nordmann P."/>
            <person name="Barbe V."/>
            <person name="Poirel L."/>
            <person name="Mangenot S."/>
            <person name="Bataille E."/>
            <person name="Dossat C."/>
            <person name="Gas S."/>
            <person name="Kreimeyer A."/>
            <person name="Lenoble P."/>
            <person name="Oztas S."/>
            <person name="Poulain J."/>
            <person name="Segurens B."/>
            <person name="Robert C."/>
            <person name="Abergel C."/>
            <person name="Claverie J.-M."/>
            <person name="Raoult D."/>
            <person name="Medigue C."/>
            <person name="Weissenbach J."/>
            <person name="Cruveiller S."/>
        </authorList>
    </citation>
    <scope>NUCLEOTIDE SEQUENCE [LARGE SCALE GENOMIC DNA]</scope>
    <source>
        <strain>AYE</strain>
    </source>
</reference>
<name>UBIG_ACIBY</name>
<organism>
    <name type="scientific">Acinetobacter baumannii (strain AYE)</name>
    <dbReference type="NCBI Taxonomy" id="509173"/>
    <lineage>
        <taxon>Bacteria</taxon>
        <taxon>Pseudomonadati</taxon>
        <taxon>Pseudomonadota</taxon>
        <taxon>Gammaproteobacteria</taxon>
        <taxon>Moraxellales</taxon>
        <taxon>Moraxellaceae</taxon>
        <taxon>Acinetobacter</taxon>
        <taxon>Acinetobacter calcoaceticus/baumannii complex</taxon>
    </lineage>
</organism>
<accession>B0V5X4</accession>
<protein>
    <recommendedName>
        <fullName evidence="1">Ubiquinone biosynthesis O-methyltransferase</fullName>
    </recommendedName>
    <alternativeName>
        <fullName evidence="1">2-polyprenyl-6-hydroxyphenol methylase</fullName>
        <ecNumber evidence="1">2.1.1.222</ecNumber>
    </alternativeName>
    <alternativeName>
        <fullName evidence="1">3-demethylubiquinone 3-O-methyltransferase</fullName>
        <ecNumber evidence="1">2.1.1.64</ecNumber>
    </alternativeName>
</protein>
<evidence type="ECO:0000255" key="1">
    <source>
        <dbReference type="HAMAP-Rule" id="MF_00472"/>
    </source>
</evidence>
<dbReference type="EC" id="2.1.1.222" evidence="1"/>
<dbReference type="EC" id="2.1.1.64" evidence="1"/>
<dbReference type="EMBL" id="CU459141">
    <property type="protein sequence ID" value="CAM88592.1"/>
    <property type="molecule type" value="Genomic_DNA"/>
</dbReference>
<dbReference type="RefSeq" id="WP_000080759.1">
    <property type="nucleotide sequence ID" value="NZ_JBDGFB010000006.1"/>
</dbReference>
<dbReference type="SMR" id="B0V5X4"/>
<dbReference type="EnsemblBacteria" id="CAM88592">
    <property type="protein sequence ID" value="CAM88592"/>
    <property type="gene ID" value="ABAYE3834"/>
</dbReference>
<dbReference type="GeneID" id="92891998"/>
<dbReference type="KEGG" id="aby:ABAYE3834"/>
<dbReference type="HOGENOM" id="CLU_042432_5_0_6"/>
<dbReference type="UniPathway" id="UPA00232"/>
<dbReference type="GO" id="GO:0102208">
    <property type="term" value="F:2-polyprenyl-6-hydroxyphenol methylase activity"/>
    <property type="evidence" value="ECO:0007669"/>
    <property type="project" value="UniProtKB-EC"/>
</dbReference>
<dbReference type="GO" id="GO:0061542">
    <property type="term" value="F:3-demethylubiquinol 3-O-methyltransferase activity"/>
    <property type="evidence" value="ECO:0007669"/>
    <property type="project" value="UniProtKB-UniRule"/>
</dbReference>
<dbReference type="GO" id="GO:0010420">
    <property type="term" value="F:polyprenyldihydroxybenzoate methyltransferase activity"/>
    <property type="evidence" value="ECO:0007669"/>
    <property type="project" value="InterPro"/>
</dbReference>
<dbReference type="GO" id="GO:0032259">
    <property type="term" value="P:methylation"/>
    <property type="evidence" value="ECO:0007669"/>
    <property type="project" value="UniProtKB-KW"/>
</dbReference>
<dbReference type="CDD" id="cd02440">
    <property type="entry name" value="AdoMet_MTases"/>
    <property type="match status" value="1"/>
</dbReference>
<dbReference type="FunFam" id="3.40.50.150:FF:000028">
    <property type="entry name" value="Ubiquinone biosynthesis O-methyltransferase"/>
    <property type="match status" value="1"/>
</dbReference>
<dbReference type="Gene3D" id="3.40.50.150">
    <property type="entry name" value="Vaccinia Virus protein VP39"/>
    <property type="match status" value="1"/>
</dbReference>
<dbReference type="HAMAP" id="MF_00472">
    <property type="entry name" value="UbiG"/>
    <property type="match status" value="1"/>
</dbReference>
<dbReference type="InterPro" id="IPR029063">
    <property type="entry name" value="SAM-dependent_MTases_sf"/>
</dbReference>
<dbReference type="InterPro" id="IPR010233">
    <property type="entry name" value="UbiG_MeTrfase"/>
</dbReference>
<dbReference type="NCBIfam" id="TIGR01983">
    <property type="entry name" value="UbiG"/>
    <property type="match status" value="1"/>
</dbReference>
<dbReference type="PANTHER" id="PTHR43464">
    <property type="entry name" value="METHYLTRANSFERASE"/>
    <property type="match status" value="1"/>
</dbReference>
<dbReference type="PANTHER" id="PTHR43464:SF19">
    <property type="entry name" value="UBIQUINONE BIOSYNTHESIS O-METHYLTRANSFERASE, MITOCHONDRIAL"/>
    <property type="match status" value="1"/>
</dbReference>
<dbReference type="Pfam" id="PF13489">
    <property type="entry name" value="Methyltransf_23"/>
    <property type="match status" value="1"/>
</dbReference>
<dbReference type="SUPFAM" id="SSF53335">
    <property type="entry name" value="S-adenosyl-L-methionine-dependent methyltransferases"/>
    <property type="match status" value="1"/>
</dbReference>
<feature type="chain" id="PRO_1000199665" description="Ubiquinone biosynthesis O-methyltransferase">
    <location>
        <begin position="1"/>
        <end position="237"/>
    </location>
</feature>
<feature type="binding site" evidence="1">
    <location>
        <position position="38"/>
    </location>
    <ligand>
        <name>S-adenosyl-L-methionine</name>
        <dbReference type="ChEBI" id="CHEBI:59789"/>
    </ligand>
</feature>
<feature type="binding site" evidence="1">
    <location>
        <position position="58"/>
    </location>
    <ligand>
        <name>S-adenosyl-L-methionine</name>
        <dbReference type="ChEBI" id="CHEBI:59789"/>
    </ligand>
</feature>
<feature type="binding site" evidence="1">
    <location>
        <position position="79"/>
    </location>
    <ligand>
        <name>S-adenosyl-L-methionine</name>
        <dbReference type="ChEBI" id="CHEBI:59789"/>
    </ligand>
</feature>
<feature type="binding site" evidence="1">
    <location>
        <position position="124"/>
    </location>
    <ligand>
        <name>S-adenosyl-L-methionine</name>
        <dbReference type="ChEBI" id="CHEBI:59789"/>
    </ligand>
</feature>
<proteinExistence type="inferred from homology"/>